<organism>
    <name type="scientific">Mus musculus</name>
    <name type="common">Mouse</name>
    <dbReference type="NCBI Taxonomy" id="10090"/>
    <lineage>
        <taxon>Eukaryota</taxon>
        <taxon>Metazoa</taxon>
        <taxon>Chordata</taxon>
        <taxon>Craniata</taxon>
        <taxon>Vertebrata</taxon>
        <taxon>Euteleostomi</taxon>
        <taxon>Mammalia</taxon>
        <taxon>Eutheria</taxon>
        <taxon>Euarchontoglires</taxon>
        <taxon>Glires</taxon>
        <taxon>Rodentia</taxon>
        <taxon>Myomorpha</taxon>
        <taxon>Muroidea</taxon>
        <taxon>Muridae</taxon>
        <taxon>Murinae</taxon>
        <taxon>Mus</taxon>
        <taxon>Mus</taxon>
    </lineage>
</organism>
<protein>
    <recommendedName>
        <fullName evidence="19">Protein FosB</fullName>
    </recommendedName>
    <alternativeName>
        <fullName evidence="20">FBJ osteosarcoma oncogene B</fullName>
    </alternativeName>
    <alternativeName>
        <fullName evidence="19">Transcription factor AP-1 subunit FosB</fullName>
    </alternativeName>
</protein>
<reference key="1">
    <citation type="journal article" date="1989" name="EMBO J.">
        <title>The product of a novel growth factor activated gene, fos B, interacts with JUN proteins enhancing their DNA binding activity.</title>
        <authorList>
            <person name="Zerial M."/>
            <person name="Toschi L."/>
            <person name="Ryseck R.-P."/>
            <person name="Schuermann M."/>
            <person name="Mueller R."/>
            <person name="Bravo R."/>
        </authorList>
    </citation>
    <scope>NUCLEOTIDE SEQUENCE [MRNA] (ISOFORM 1)</scope>
    <scope>FUNCTION</scope>
    <scope>IDENTIFICATION IN AN AP-1 COMPLEX</scope>
    <scope>SUBUNIT</scope>
    <scope>INTERACTION WITH JUN AND JUNB</scope>
    <scope>SUBCELLULAR LOCATION</scope>
    <scope>INDUCTION BY GROWTH FACTORS</scope>
</reference>
<reference key="2">
    <citation type="journal article" date="1992" name="Nucleic Acids Res.">
        <title>Structure and mapping of the fosB gene. FosB downregulates the activity of the fosB promoter.</title>
        <authorList>
            <person name="Lazo P.S."/>
            <person name="Dorfman K."/>
            <person name="Noguchi T."/>
            <person name="Mattei M.-G."/>
            <person name="Bravo R."/>
        </authorList>
    </citation>
    <scope>NUCLEOTIDE SEQUENCE [GENOMIC DNA]</scope>
</reference>
<reference evidence="21" key="3">
    <citation type="journal article" date="2009" name="PLoS Biol.">
        <title>Lineage-specific biology revealed by a finished genome assembly of the mouse.</title>
        <authorList>
            <person name="Church D.M."/>
            <person name="Goodstadt L."/>
            <person name="Hillier L.W."/>
            <person name="Zody M.C."/>
            <person name="Goldstein S."/>
            <person name="She X."/>
            <person name="Bult C.J."/>
            <person name="Agarwala R."/>
            <person name="Cherry J.L."/>
            <person name="DiCuccio M."/>
            <person name="Hlavina W."/>
            <person name="Kapustin Y."/>
            <person name="Meric P."/>
            <person name="Maglott D."/>
            <person name="Birtle Z."/>
            <person name="Marques A.C."/>
            <person name="Graves T."/>
            <person name="Zhou S."/>
            <person name="Teague B."/>
            <person name="Potamousis K."/>
            <person name="Churas C."/>
            <person name="Place M."/>
            <person name="Herschleb J."/>
            <person name="Runnheim R."/>
            <person name="Forrest D."/>
            <person name="Amos-Landgraf J."/>
            <person name="Schwartz D.C."/>
            <person name="Cheng Z."/>
            <person name="Lindblad-Toh K."/>
            <person name="Eichler E.E."/>
            <person name="Ponting C.P."/>
        </authorList>
    </citation>
    <scope>NUCLEOTIDE SEQUENCE [LARGE SCALE GENOMIC DNA]</scope>
    <source>
        <strain evidence="21">C57BL/6J</strain>
    </source>
</reference>
<reference key="4">
    <citation type="journal article" date="1991" name="Cell">
        <title>A naturally occurring truncated form of FosB that inhibits Fos/Jun transcriptional activity.</title>
        <authorList>
            <person name="Nakabeppu Y."/>
            <person name="Nathans D."/>
        </authorList>
    </citation>
    <scope>FUNCTION</scope>
    <scope>SUBUNIT</scope>
</reference>
<reference key="5">
    <citation type="journal article" date="1996" name="Cell">
        <title>A defect in nurturing in mice lacking the immediate early gene fosB.</title>
        <authorList>
            <person name="Brown J.R."/>
            <person name="Ye H."/>
            <person name="Bronson R.T."/>
            <person name="Dikkes P."/>
            <person name="Greenberg M.E."/>
        </authorList>
    </citation>
    <scope>FUNCTION</scope>
    <scope>TISSUE SPECIFICITY</scope>
    <scope>INDUCTION</scope>
    <scope>DISRUPTION PHENOTYPE</scope>
</reference>
<reference key="6">
    <citation type="journal article" date="1997" name="Proc. Natl. Acad. Sci. U.S.A.">
        <title>FosB mutant mice: loss of chronic cocaine induction of Fos-related proteins and heightened sensitivity to cocaine's psychomotor and rewarding effects.</title>
        <authorList>
            <person name="Hiroi N."/>
            <person name="Brown J.R."/>
            <person name="Haile C.N."/>
            <person name="Ye H."/>
            <person name="Greenberg M.E."/>
            <person name="Nestler E.J."/>
        </authorList>
    </citation>
    <scope>FUNCTION</scope>
    <scope>SUBCELLULAR LOCATION</scope>
    <scope>TISSUE SPECIFICITY</scope>
    <scope>INDUCTION BY COCAINE</scope>
    <scope>DISRUPTION PHENOTYPE</scope>
</reference>
<reference key="7">
    <citation type="journal article" date="2006" name="J. Neurosci.">
        <title>Regulation of DeltaFosB stability by phosphorylation.</title>
        <authorList>
            <person name="Ulery P.G."/>
            <person name="Rudenko G."/>
            <person name="Nestler E.J."/>
        </authorList>
    </citation>
    <scope>FUNCTION</scope>
    <scope>PHOSPHORYLATION AT SER-27</scope>
    <scope>MUTAGENESIS OF SER-27</scope>
</reference>
<reference key="8">
    <citation type="journal article" date="2007" name="Eur. J. Neurosci.">
        <title>Regulation of DeltaFosB transcriptional activity by Ser27 phosphorylation.</title>
        <authorList>
            <person name="Ulery P.G."/>
            <person name="Nestler E.J."/>
        </authorList>
    </citation>
    <scope>FUNCTION</scope>
    <scope>SUBCELLULAR LOCATION</scope>
    <scope>PHOSPHORYLATION AT SER-27</scope>
</reference>
<reference key="9">
    <citation type="journal article" date="2008" name="Behav. Brain Res.">
        <title>Role of fosB in behaviours related to morphine reward and spatial memory.</title>
        <authorList>
            <person name="Solecki W."/>
            <person name="Krowka T."/>
            <person name="Kubik J."/>
            <person name="Kaczmarek L."/>
            <person name="Przewlocki R."/>
        </authorList>
    </citation>
    <scope>FUNCTION</scope>
    <scope>DISRUPTION PHENOTYPE</scope>
</reference>
<reference key="10">
    <citation type="journal article" date="2010" name="Nat. Neurosci.">
        <title>DeltaFosB in brain reward circuits mediates resilience to stress and antidepressant responses.</title>
        <authorList>
            <person name="Vialou V."/>
            <person name="Robison A.J."/>
            <person name="Laplant Q.C."/>
            <person name="Covington H.E. III"/>
            <person name="Dietz D.M."/>
            <person name="Ohnishi Y.N."/>
            <person name="Mouzon E."/>
            <person name="Rush A.J. III"/>
            <person name="Watts E.L."/>
            <person name="Wallace D.L."/>
            <person name="Iniguez S.D."/>
            <person name="Ohnishi Y.H."/>
            <person name="Steiner M.A."/>
            <person name="Warren B.L."/>
            <person name="Krishnan V."/>
            <person name="Bolanos C.A."/>
            <person name="Neve R.L."/>
            <person name="Ghose S."/>
            <person name="Berton O."/>
            <person name="Tamminga C.A."/>
            <person name="Nestler E.J."/>
        </authorList>
    </citation>
    <scope>TISSUE SPECIFICITY</scope>
    <scope>INDUCTION BY CHRONIC SOCIAL DEFEAT STRESS</scope>
</reference>
<reference key="11">
    <citation type="journal article" date="2013" name="Neuropsychopharmacology">
        <title>fosB-null mice display impaired adult hippocampal neurogenesis and spontaneous epilepsy with depressive behavior.</title>
        <authorList>
            <person name="Yutsudo N."/>
            <person name="Kamada T."/>
            <person name="Kajitani K."/>
            <person name="Nomaru H."/>
            <person name="Katogi A."/>
            <person name="Ohnishi Y.H."/>
            <person name="Ohnishi Y.N."/>
            <person name="Takase K."/>
            <person name="Sakumi K."/>
            <person name="Shigeto H."/>
            <person name="Nakabeppu Y."/>
        </authorList>
    </citation>
    <scope>FUNCTION</scope>
    <scope>SUBCELLULAR LOCATION</scope>
    <scope>TISSUE SPECIFICITY</scope>
    <scope>INDUCTION BY KAINIC ACID</scope>
    <scope>DISRUPTION PHENOTYPE</scope>
</reference>
<reference key="12">
    <citation type="journal article" date="2013" name="Proc. Natl. Acad. Sci. U.S.A.">
        <title>DeltaFosB differentially modulates nucleus accumbens direct and indirect pathway function.</title>
        <authorList>
            <person name="Grueter B.A."/>
            <person name="Robison A.J."/>
            <person name="Neve R.L."/>
            <person name="Nestler E.J."/>
            <person name="Malenka R.C."/>
        </authorList>
    </citation>
    <scope>FUNCTION (ISOFORM 2)</scope>
</reference>
<reference key="13">
    <citation type="journal article" date="2015" name="J. Neurosci.">
        <title>Experience-Dependent Induction of Hippocampal DeltaFosB Controls Learning.</title>
        <authorList>
            <person name="Eagle A.L."/>
            <person name="Gajewski P.A."/>
            <person name="Yang M."/>
            <person name="Kechner M.E."/>
            <person name="Al Masraf B.S."/>
            <person name="Kennedy P.J."/>
            <person name="Wang H."/>
            <person name="Mazei-Robison M.S."/>
            <person name="Robison A.J."/>
        </authorList>
    </citation>
    <scope>TISSUE SPECIFICITY</scope>
    <scope>INDUCTION BY NOVELTY EXPOSURE</scope>
</reference>
<reference key="14">
    <citation type="journal article" date="2017" name="Mol. Cell">
        <title>AP-1 Transcription Factors and the BAF Complex Mediate Signal-Dependent Enhancer Selection.</title>
        <authorList>
            <person name="Vierbuchen T."/>
            <person name="Ling E."/>
            <person name="Cowley C.J."/>
            <person name="Couch C.H."/>
            <person name="Wang X."/>
            <person name="Harmin D.A."/>
            <person name="Roberts C.W.M."/>
            <person name="Greenberg M.E."/>
        </authorList>
    </citation>
    <scope>FUNCTION</scope>
    <scope>INTERACTION WITH SMARCB1; SMARCD1; ARID1A AND JUN</scope>
</reference>
<reference key="15">
    <citation type="journal article" date="2019" name="Neuroscience">
        <title>Hippocampal Subgranular Zone FosB Expression Is Critical for Neurogenesis and Learning.</title>
        <authorList>
            <person name="Manning C.E."/>
            <person name="Eagle A.L."/>
            <person name="Kwiatkowski C.C."/>
            <person name="Achargui R."/>
            <person name="Woodworth H."/>
            <person name="Potter E."/>
            <person name="Ohnishi Y."/>
            <person name="Leinninger G.M."/>
            <person name="Robison A.J."/>
        </authorList>
    </citation>
    <scope>FUNCTION</scope>
    <scope>SUBCELLULAR LOCATION</scope>
    <scope>TISSUE SPECIFICITY</scope>
    <scope>DISRUPTION PHENOTYPE</scope>
</reference>
<proteinExistence type="evidence at protein level"/>
<accession>P13346</accession>
<accession>A0A140LIE4</accession>
<dbReference type="EMBL" id="X14897">
    <property type="protein sequence ID" value="CAA33026.1"/>
    <property type="molecule type" value="mRNA"/>
</dbReference>
<dbReference type="EMBL" id="AF093624">
    <property type="protein sequence ID" value="AAD13196.1"/>
    <property type="molecule type" value="Genomic_DNA"/>
</dbReference>
<dbReference type="CCDS" id="CCDS20897.1">
    <molecule id="P13346-1"/>
</dbReference>
<dbReference type="CCDS" id="CCDS85225.1">
    <molecule id="P13346-2"/>
</dbReference>
<dbReference type="PIR" id="S35477">
    <property type="entry name" value="TVMSFB"/>
</dbReference>
<dbReference type="RefSeq" id="NP_001334515.1">
    <molecule id="P13346-2"/>
    <property type="nucleotide sequence ID" value="NM_001347586.1"/>
</dbReference>
<dbReference type="RefSeq" id="NP_032062.1">
    <molecule id="P13346-1"/>
    <property type="nucleotide sequence ID" value="NM_008036.2"/>
</dbReference>
<dbReference type="RefSeq" id="XP_006539606.1">
    <property type="nucleotide sequence ID" value="XM_006539543.2"/>
</dbReference>
<dbReference type="SMR" id="P13346"/>
<dbReference type="BioGRID" id="199727">
    <property type="interactions" value="2"/>
</dbReference>
<dbReference type="DIP" id="DIP-1067N"/>
<dbReference type="FunCoup" id="P13346">
    <property type="interactions" value="2301"/>
</dbReference>
<dbReference type="IntAct" id="P13346">
    <property type="interactions" value="1"/>
</dbReference>
<dbReference type="STRING" id="10090.ENSMUSP00000003640"/>
<dbReference type="GlyGen" id="P13346">
    <property type="glycosylation" value="1 site"/>
</dbReference>
<dbReference type="iPTMnet" id="P13346"/>
<dbReference type="PhosphoSitePlus" id="P13346"/>
<dbReference type="PaxDb" id="10090-ENSMUSP00000003640"/>
<dbReference type="ProteomicsDB" id="271710"/>
<dbReference type="ProteomicsDB" id="346702"/>
<dbReference type="Antibodypedia" id="4139">
    <property type="antibodies" value="557 antibodies from 39 providers"/>
</dbReference>
<dbReference type="DNASU" id="14282"/>
<dbReference type="Ensembl" id="ENSMUST00000003640.4">
    <molecule id="P13346-1"/>
    <property type="protein sequence ID" value="ENSMUSP00000003640.3"/>
    <property type="gene ID" value="ENSMUSG00000003545.4"/>
</dbReference>
<dbReference type="Ensembl" id="ENSMUST00000208446.2">
    <molecule id="P13346-2"/>
    <property type="protein sequence ID" value="ENSMUSP00000146789.2"/>
    <property type="gene ID" value="ENSMUSG00000003545.4"/>
</dbReference>
<dbReference type="GeneID" id="14282"/>
<dbReference type="KEGG" id="mmu:14282"/>
<dbReference type="UCSC" id="uc009flk.1">
    <molecule id="P13346-1"/>
    <property type="organism name" value="mouse"/>
</dbReference>
<dbReference type="AGR" id="MGI:95575"/>
<dbReference type="CTD" id="2354"/>
<dbReference type="MGI" id="MGI:95575">
    <property type="gene designation" value="Fosb"/>
</dbReference>
<dbReference type="VEuPathDB" id="HostDB:ENSMUSG00000003545"/>
<dbReference type="eggNOG" id="KOG1414">
    <property type="taxonomic scope" value="Eukaryota"/>
</dbReference>
<dbReference type="GeneTree" id="ENSGT00940000160358"/>
<dbReference type="HOGENOM" id="CLU_049742_0_0_1"/>
<dbReference type="InParanoid" id="P13346"/>
<dbReference type="OMA" id="GCKIPFA"/>
<dbReference type="OrthoDB" id="5866312at2759"/>
<dbReference type="PhylomeDB" id="P13346"/>
<dbReference type="TreeFam" id="TF326301"/>
<dbReference type="BioGRID-ORCS" id="14282">
    <property type="hits" value="1 hit in 78 CRISPR screens"/>
</dbReference>
<dbReference type="ChiTaRS" id="Fosb">
    <property type="organism name" value="mouse"/>
</dbReference>
<dbReference type="PRO" id="PR:P13346"/>
<dbReference type="Proteomes" id="UP000000589">
    <property type="component" value="Chromosome 7"/>
</dbReference>
<dbReference type="RNAct" id="P13346">
    <property type="molecule type" value="protein"/>
</dbReference>
<dbReference type="Bgee" id="ENSMUSG00000003545">
    <property type="expression patterns" value="Expressed in granulocyte and 87 other cell types or tissues"/>
</dbReference>
<dbReference type="ExpressionAtlas" id="P13346">
    <property type="expression patterns" value="baseline and differential"/>
</dbReference>
<dbReference type="GO" id="GO:0005829">
    <property type="term" value="C:cytosol"/>
    <property type="evidence" value="ECO:0007669"/>
    <property type="project" value="Ensembl"/>
</dbReference>
<dbReference type="GO" id="GO:0005654">
    <property type="term" value="C:nucleoplasm"/>
    <property type="evidence" value="ECO:0007669"/>
    <property type="project" value="Ensembl"/>
</dbReference>
<dbReference type="GO" id="GO:0003677">
    <property type="term" value="F:DNA binding"/>
    <property type="evidence" value="ECO:0000314"/>
    <property type="project" value="MGI"/>
</dbReference>
<dbReference type="GO" id="GO:0001228">
    <property type="term" value="F:DNA-binding transcription activator activity, RNA polymerase II-specific"/>
    <property type="evidence" value="ECO:0000314"/>
    <property type="project" value="NTNU_SB"/>
</dbReference>
<dbReference type="GO" id="GO:0000978">
    <property type="term" value="F:RNA polymerase II cis-regulatory region sequence-specific DNA binding"/>
    <property type="evidence" value="ECO:0000314"/>
    <property type="project" value="NTNU_SB"/>
</dbReference>
<dbReference type="GO" id="GO:0048148">
    <property type="term" value="P:behavioral response to cocaine"/>
    <property type="evidence" value="ECO:0007669"/>
    <property type="project" value="Ensembl"/>
</dbReference>
<dbReference type="GO" id="GO:0071277">
    <property type="term" value="P:cellular response to calcium ion"/>
    <property type="evidence" value="ECO:0000314"/>
    <property type="project" value="MGI"/>
</dbReference>
<dbReference type="GO" id="GO:0032870">
    <property type="term" value="P:cellular response to hormone stimulus"/>
    <property type="evidence" value="ECO:0007669"/>
    <property type="project" value="Ensembl"/>
</dbReference>
<dbReference type="GO" id="GO:0007565">
    <property type="term" value="P:female pregnancy"/>
    <property type="evidence" value="ECO:0007669"/>
    <property type="project" value="Ensembl"/>
</dbReference>
<dbReference type="GO" id="GO:0045944">
    <property type="term" value="P:positive regulation of transcription by RNA polymerase II"/>
    <property type="evidence" value="ECO:0000314"/>
    <property type="project" value="NTNU_SB"/>
</dbReference>
<dbReference type="GO" id="GO:0001975">
    <property type="term" value="P:response to amphetamine"/>
    <property type="evidence" value="ECO:0007669"/>
    <property type="project" value="Ensembl"/>
</dbReference>
<dbReference type="GO" id="GO:0051591">
    <property type="term" value="P:response to cAMP"/>
    <property type="evidence" value="ECO:0007669"/>
    <property type="project" value="Ensembl"/>
</dbReference>
<dbReference type="GO" id="GO:0051412">
    <property type="term" value="P:response to corticosterone"/>
    <property type="evidence" value="ECO:0007669"/>
    <property type="project" value="Ensembl"/>
</dbReference>
<dbReference type="GO" id="GO:0045471">
    <property type="term" value="P:response to ethanol"/>
    <property type="evidence" value="ECO:0007669"/>
    <property type="project" value="Ensembl"/>
</dbReference>
<dbReference type="GO" id="GO:0009612">
    <property type="term" value="P:response to mechanical stimulus"/>
    <property type="evidence" value="ECO:0007669"/>
    <property type="project" value="Ensembl"/>
</dbReference>
<dbReference type="GO" id="GO:0043278">
    <property type="term" value="P:response to morphine"/>
    <property type="evidence" value="ECO:0007669"/>
    <property type="project" value="Ensembl"/>
</dbReference>
<dbReference type="GO" id="GO:0035094">
    <property type="term" value="P:response to nicotine"/>
    <property type="evidence" value="ECO:0007669"/>
    <property type="project" value="Ensembl"/>
</dbReference>
<dbReference type="GO" id="GO:0032570">
    <property type="term" value="P:response to progesterone"/>
    <property type="evidence" value="ECO:0007669"/>
    <property type="project" value="Ensembl"/>
</dbReference>
<dbReference type="GO" id="GO:0009410">
    <property type="term" value="P:response to xenobiotic stimulus"/>
    <property type="evidence" value="ECO:0007669"/>
    <property type="project" value="Ensembl"/>
</dbReference>
<dbReference type="GO" id="GO:0006366">
    <property type="term" value="P:transcription by RNA polymerase II"/>
    <property type="evidence" value="ECO:0007669"/>
    <property type="project" value="Ensembl"/>
</dbReference>
<dbReference type="CDD" id="cd14721">
    <property type="entry name" value="bZIP_Fos"/>
    <property type="match status" value="1"/>
</dbReference>
<dbReference type="FunFam" id="1.20.5.170:FF:000006">
    <property type="entry name" value="fos-related antigen 2 isoform X1"/>
    <property type="match status" value="1"/>
</dbReference>
<dbReference type="Gene3D" id="1.20.5.170">
    <property type="match status" value="1"/>
</dbReference>
<dbReference type="InterPro" id="IPR000837">
    <property type="entry name" value="AP-1"/>
</dbReference>
<dbReference type="InterPro" id="IPR004827">
    <property type="entry name" value="bZIP"/>
</dbReference>
<dbReference type="InterPro" id="IPR046347">
    <property type="entry name" value="bZIP_sf"/>
</dbReference>
<dbReference type="PANTHER" id="PTHR23351">
    <property type="entry name" value="FOS TRANSCRIPTION FACTOR-RELATED"/>
    <property type="match status" value="1"/>
</dbReference>
<dbReference type="PANTHER" id="PTHR23351:SF3">
    <property type="entry name" value="PROTEIN FOSB"/>
    <property type="match status" value="1"/>
</dbReference>
<dbReference type="Pfam" id="PF00170">
    <property type="entry name" value="bZIP_1"/>
    <property type="match status" value="1"/>
</dbReference>
<dbReference type="PRINTS" id="PR00042">
    <property type="entry name" value="LEUZIPPRFOS"/>
</dbReference>
<dbReference type="SMART" id="SM00338">
    <property type="entry name" value="BRLZ"/>
    <property type="match status" value="1"/>
</dbReference>
<dbReference type="SUPFAM" id="SSF57959">
    <property type="entry name" value="Leucine zipper domain"/>
    <property type="match status" value="1"/>
</dbReference>
<dbReference type="PROSITE" id="PS50217">
    <property type="entry name" value="BZIP"/>
    <property type="match status" value="1"/>
</dbReference>
<dbReference type="PROSITE" id="PS00036">
    <property type="entry name" value="BZIP_BASIC"/>
    <property type="match status" value="1"/>
</dbReference>
<keyword id="KW-0025">Alternative splicing</keyword>
<keyword id="KW-1015">Disulfide bond</keyword>
<keyword id="KW-0238">DNA-binding</keyword>
<keyword id="KW-0539">Nucleus</keyword>
<keyword id="KW-0597">Phosphoprotein</keyword>
<keyword id="KW-1185">Reference proteome</keyword>
<name>FOSB_MOUSE</name>
<sequence length="338" mass="35977">MFQAFPGDYDSGSRCSSSPSAESQYLSSVDSFGSPPTAAASQECAGLGEMPGSFVPTVTAITTSQDLQWLVQPTLISSMAQSQGQPLASQPPAVDPYDMPGTSYSTPGLSAYSTGGASGSGGPSTSTTTSGPVSARPARARPRRPREETLTPEEEEKRRVRRERNKLAAAKCRNRRRELTDRLQAETDQLEEEKAELESEIAELQKEKERLEFVLVAHKPGCKIPYEEGPGPGPLAEVRDLPGSTSAKEDGFGWLLPPPPPPPLPFQSSRDAPPNLTASLFTHSEVQVLGDPFPVVSPSYTSSFVLTCPEVSAFAGAQRTSGSEQPSDPLNSPSLLAL</sequence>
<gene>
    <name evidence="20" type="primary">Fosb</name>
</gene>
<comment type="function">
    <text evidence="1 5 6 7 9 11 13 14 15 16">Heterodimerizes with proteins of the JUN family to form an AP-1 transcription factor complex, thereby enhancing their DNA binding activity to gene promoters containing an AP-1 consensus sequence 5'-TGA[GC]TCA-3' and enhancing their transcriptional activity (PubMed:1900040, PubMed:2498083). As part of the AP-1 complex, facilitates enhancer selection together with cell-type-specific transcription factors by collaboratively binding to nucleosomal enhancers and recruiting the SWI/SNF (BAF) chromatin remodeling complex to establish accessible chromatin (PubMed:29272704). Together with JUN, plays a role in activation-induced cell death of T cells by binding to the AP-1 promoter site of FASLG/CD95L, and inducing its transcription in response to activation of the TCR/CD3 signaling pathway (By similarity). Exhibits transactivation activity in vitro (PubMed:17241283). Involved in the display of nurturing behavior towards newborns (PubMed:8706134). May play a role in neurogenesis in the hippocampus and in learning and memory-related tasks by regulating the expression of various genes involved in neurogenesis, depression and epilepsy (PubMed:23303048, PubMed:30902680). Implicated in behavioral responses related to morphine reward and spatial memory (PubMed:18407360, PubMed:9294222).</text>
</comment>
<comment type="function">
    <molecule>Isoform 2</molecule>
    <text evidence="5 6 7 9 10">Exhibits lower transactivation activity than isoform 1 in vitro (PubMed:17241283). The heterodimer with JUN does not display any transcriptional activity, and may thereby act as an transcriptional inhibitor (PubMed:1900040). May be involved in the regulation of neurogenesis in the hippocampus (PubMed:23303048). May play a role in synaptic modifications in nucleus accumbens medium spiny neurons and thereby play a role in adaptive and pathological reward-dependent learning, including maladaptive responses involved in drug addiction (PubMed:23319622). Seems to be more stably expressed with a half-life of ~9.5 hours in cell culture as compared to 1.5 hours half-life of isoform 1 (PubMed:18407360).</text>
</comment>
<comment type="subunit">
    <text evidence="7 11 13">Heterodimer; binds to DNA as heterodimer (PubMed:1900040, PubMed:2498083). Component of an AP-1 transcription factor complex; composed of FOS-JUN heterodimers (PubMed:1900040, PubMed:2498083). As part of the AP-1 transcription factor complex, forms heterodimers with JUN, JUNB or JUND, thereby binding to the AP-1 consensus sequence and stimulating transcription (PubMed:1900040, PubMed:2498083). Interacts with the BAF multiprotein chromatin-remodeling complex subunits SMARCB1 and SMARCD1 (PubMed:29272704). Interacts with ARID1A and JUN (PubMed:29272704).</text>
</comment>
<comment type="subunit">
    <molecule>Isoform 2</molecule>
    <text evidence="1 7">Homodimer under oxidizing conditions and monomer under reducing conditions (in vitro) (By similarity). Heterodimer; binds to DNA as heterodimer (PubMed:1900040). Forms heterodimers with JUNB, JUN or JUND; thereby binding to the AP-1 consensus sequence but does not stimulate transcription (PubMed:1900040). Forms heterodimers with JUND under oxidizing conditions (By similarity).</text>
</comment>
<comment type="subcellular location">
    <subcellularLocation>
        <location evidence="5 9 11 14 16">Nucleus</location>
    </subcellularLocation>
</comment>
<comment type="alternative products">
    <event type="alternative splicing"/>
    <isoform>
        <id>P13346-1</id>
        <name>1</name>
        <sequence type="displayed"/>
    </isoform>
    <isoform>
        <id>P13346-2</id>
        <name>2</name>
        <name evidence="18">deltaFosB</name>
        <name evidence="17">FosB2</name>
        <name evidence="17">FosB[short form]</name>
        <sequence type="described" ref="VSP_061375"/>
    </isoform>
</comment>
<comment type="tissue specificity">
    <text evidence="9 12 14 15 16">Expressed in brain, including the preoptic area of the hypothalamus, the main and accessory olfactory bulbs, the pyriform cortex and the hippocampus (at protein level) (PubMed:23303048, PubMed:8706134). Expressed in the neurons of the subgranular zone of the dentate gyrus in the hippocampus (at protein level) (PubMed:23303048, PubMed:30902680). Expressed in pyramidal cells in CA1 and CA3, in the dentate gyrus and the nucleus accumbens of the striatum (at protein level) (PubMed:26446228, PubMed:9294222).</text>
</comment>
<comment type="tissue specificity">
    <molecule>Isoform 2</molecule>
    <text evidence="8 9">Expressed in the core and shell of the nucleus accumbens of the striatum (at protein level) (PubMed:20473292). Expressed in the neurons of the subgranular zone of the dentate gyrus in the hippocampus (at protein level) (PubMed:23303048).</text>
</comment>
<comment type="induction">
    <text evidence="9 11 12 15 16">Induced by growth factors (PubMed:2498083). Up-regulated in the preoptic area of the hypothalamus after 6 hours of exposure to pups (PubMed:8706134). Induced by cocaine in the striatum (PubMed:9294222). Induced by kainic acid (PubMed:23303048). Induced in the hippocampus by novelty exposure and spatial learning (PubMed:26446228).</text>
</comment>
<comment type="induction">
    <molecule>Isoform 1</molecule>
    <text evidence="16">Induced by cocaine in the striatum.</text>
</comment>
<comment type="induction">
    <molecule>Isoform 2</molecule>
    <text evidence="8 16">Induced by cocaine in the striatum (PubMed:9294222). Induced by chronic social defeat stress, with resilient mice showing the greatest induction in both core and shell nucleus accumbens subregions (PubMed:20473292).</text>
</comment>
<comment type="domain">
    <text evidence="1">Binds DNA via bZIP domain; DNA-binding is under control of cellular redox homeostasis (in vitro) (By similarity). To enable DNA binding, the bZIP domain must undergo a conformational rearrangement which requires the reduction of the interchain disulfide bond between FosB and JunD (in vitro) (By similarity). The bZIP domain is able to form homomeric oligomers via formation of interchain disulfide bonds under non-reducing conditions (in vitro) (By similarity). Under reducing conditions, the disulfide-bonded homomeric species dissociates into monomers (in vitro) (By similarity).</text>
</comment>
<comment type="PTM">
    <text evidence="4">Phosphorylated.</text>
</comment>
<comment type="PTM">
    <molecule>Isoform 2</molecule>
    <text evidence="4 5">Phosphorylated at Ser-27 by CSNK2A1; phosphorylation increases protein stability and transactivation potential.</text>
</comment>
<comment type="disruption phenotype">
    <text evidence="6 9 14 15 16">Deficiency in the ability to nurture young animals and the majority of pups die within 1-2 days of birth (PubMed:8706134). Impaired nurturing behavior towards newborns is observed in postpartum mothers as well as in young females and males (PubMed:8706134). Failure in AP-1 binding activity after repeated cocaine administration (PubMed:9294222). Exaggerated locomotor activation in response to initial cocaine exposures as well as robust conditioned place preference to a lower dose of cocaine, but lack of increment in cocaine-induced hyperactivity over 6 days (i.e. sensitization) (PubMed:9294222). Decreased sensitivity to rewarding properties of morphine and spatial memory impairment (PubMed:18407360). Decreased proliferation and increased ectopic migration of neural progenitor cells in the hippocampus (PubMed:23303048). Exhibit impaired adult hippocampal neurogenesis and spontaneous epilepsy with depressive behavior (PubMed:23303048). Altered gene expression in the hippocampus, including genes implicated in neurogenesis, depression, or epilepsy (PubMed:23303048). Knockout in hippocampal neurons, including neurons of the subgranular zone of the dentate gyrus, leads to a reduction of antidepressant-induced neurogenesis and impedes hippocampus-dependent learning in the novel object recognition task (PubMed:30902680).</text>
</comment>
<comment type="similarity">
    <text evidence="19">Belongs to the bZIP family. Fos subfamily.</text>
</comment>
<feature type="chain" id="PRO_0000076477" description="Protein FosB">
    <location>
        <begin position="1"/>
        <end position="338"/>
    </location>
</feature>
<feature type="domain" description="bZIP" evidence="2">
    <location>
        <begin position="155"/>
        <end position="218"/>
    </location>
</feature>
<feature type="region of interest" description="Disordered" evidence="3">
    <location>
        <begin position="1"/>
        <end position="54"/>
    </location>
</feature>
<feature type="region of interest" description="Disordered" evidence="3">
    <location>
        <begin position="80"/>
        <end position="179"/>
    </location>
</feature>
<feature type="region of interest" description="Basic motif" evidence="2">
    <location>
        <begin position="157"/>
        <end position="182"/>
    </location>
</feature>
<feature type="region of interest" description="Leucine-zipper" evidence="2">
    <location>
        <begin position="183"/>
        <end position="211"/>
    </location>
</feature>
<feature type="region of interest" description="Disordered" evidence="3">
    <location>
        <begin position="222"/>
        <end position="276"/>
    </location>
</feature>
<feature type="region of interest" description="Disordered" evidence="3">
    <location>
        <begin position="316"/>
        <end position="338"/>
    </location>
</feature>
<feature type="compositionally biased region" description="Polar residues" evidence="3">
    <location>
        <begin position="13"/>
        <end position="31"/>
    </location>
</feature>
<feature type="compositionally biased region" description="Polar residues" evidence="3">
    <location>
        <begin position="102"/>
        <end position="112"/>
    </location>
</feature>
<feature type="compositionally biased region" description="Low complexity" evidence="3">
    <location>
        <begin position="123"/>
        <end position="137"/>
    </location>
</feature>
<feature type="compositionally biased region" description="Pro residues" evidence="3">
    <location>
        <begin position="256"/>
        <end position="265"/>
    </location>
</feature>
<feature type="compositionally biased region" description="Polar residues" evidence="3">
    <location>
        <begin position="266"/>
        <end position="276"/>
    </location>
</feature>
<feature type="compositionally biased region" description="Polar residues" evidence="3">
    <location>
        <begin position="318"/>
        <end position="338"/>
    </location>
</feature>
<feature type="modified residue" description="Phosphoserine" evidence="4">
    <location>
        <position position="27"/>
    </location>
</feature>
<feature type="disulfide bond" description="Interchain (with C-279 in JUND)" evidence="1">
    <location>
        <position position="172"/>
    </location>
</feature>
<feature type="splice variant" id="VSP_061375" description="In isoform 2.">
    <location>
        <begin position="238"/>
        <end position="338"/>
    </location>
</feature>
<feature type="mutagenesis site" description="Increased degradation by the proteasome and a decrease in isoform 2/deltaFosB transactivation activity." evidence="4">
    <original>S</original>
    <variation>A</variation>
    <location>
        <position position="27"/>
    </location>
</feature>
<feature type="mutagenesis site" description="Increased protein stability." evidence="4">
    <original>S</original>
    <variation>D</variation>
    <location>
        <position position="27"/>
    </location>
</feature>
<evidence type="ECO:0000250" key="1">
    <source>
        <dbReference type="UniProtKB" id="P53539"/>
    </source>
</evidence>
<evidence type="ECO:0000255" key="2">
    <source>
        <dbReference type="PROSITE-ProRule" id="PRU00978"/>
    </source>
</evidence>
<evidence type="ECO:0000256" key="3">
    <source>
        <dbReference type="SAM" id="MobiDB-lite"/>
    </source>
</evidence>
<evidence type="ECO:0000269" key="4">
    <source>
    </source>
</evidence>
<evidence type="ECO:0000269" key="5">
    <source>
    </source>
</evidence>
<evidence type="ECO:0000269" key="6">
    <source>
    </source>
</evidence>
<evidence type="ECO:0000269" key="7">
    <source>
    </source>
</evidence>
<evidence type="ECO:0000269" key="8">
    <source>
    </source>
</evidence>
<evidence type="ECO:0000269" key="9">
    <source>
    </source>
</evidence>
<evidence type="ECO:0000269" key="10">
    <source>
    </source>
</evidence>
<evidence type="ECO:0000269" key="11">
    <source>
    </source>
</evidence>
<evidence type="ECO:0000269" key="12">
    <source>
    </source>
</evidence>
<evidence type="ECO:0000269" key="13">
    <source>
    </source>
</evidence>
<evidence type="ECO:0000269" key="14">
    <source>
    </source>
</evidence>
<evidence type="ECO:0000269" key="15">
    <source>
    </source>
</evidence>
<evidence type="ECO:0000269" key="16">
    <source>
    </source>
</evidence>
<evidence type="ECO:0000303" key="17">
    <source>
    </source>
</evidence>
<evidence type="ECO:0000303" key="18">
    <source>
    </source>
</evidence>
<evidence type="ECO:0000305" key="19"/>
<evidence type="ECO:0000312" key="20">
    <source>
        <dbReference type="MGI" id="MGI:95575"/>
    </source>
</evidence>
<evidence type="ECO:0000312" key="21">
    <source>
        <dbReference type="Proteomes" id="UP000000589"/>
    </source>
</evidence>